<organism>
    <name type="scientific">Arabidopsis thaliana</name>
    <name type="common">Mouse-ear cress</name>
    <dbReference type="NCBI Taxonomy" id="3702"/>
    <lineage>
        <taxon>Eukaryota</taxon>
        <taxon>Viridiplantae</taxon>
        <taxon>Streptophyta</taxon>
        <taxon>Embryophyta</taxon>
        <taxon>Tracheophyta</taxon>
        <taxon>Spermatophyta</taxon>
        <taxon>Magnoliopsida</taxon>
        <taxon>eudicotyledons</taxon>
        <taxon>Gunneridae</taxon>
        <taxon>Pentapetalae</taxon>
        <taxon>rosids</taxon>
        <taxon>malvids</taxon>
        <taxon>Brassicales</taxon>
        <taxon>Brassicaceae</taxon>
        <taxon>Camelineae</taxon>
        <taxon>Arabidopsis</taxon>
    </lineage>
</organism>
<reference key="1">
    <citation type="journal article" date="2000" name="Nature">
        <title>Sequence and analysis of chromosome 3 of the plant Arabidopsis thaliana.</title>
        <authorList>
            <person name="Salanoubat M."/>
            <person name="Lemcke K."/>
            <person name="Rieger M."/>
            <person name="Ansorge W."/>
            <person name="Unseld M."/>
            <person name="Fartmann B."/>
            <person name="Valle G."/>
            <person name="Bloecker H."/>
            <person name="Perez-Alonso M."/>
            <person name="Obermaier B."/>
            <person name="Delseny M."/>
            <person name="Boutry M."/>
            <person name="Grivell L.A."/>
            <person name="Mache R."/>
            <person name="Puigdomenech P."/>
            <person name="De Simone V."/>
            <person name="Choisne N."/>
            <person name="Artiguenave F."/>
            <person name="Robert C."/>
            <person name="Brottier P."/>
            <person name="Wincker P."/>
            <person name="Cattolico L."/>
            <person name="Weissenbach J."/>
            <person name="Saurin W."/>
            <person name="Quetier F."/>
            <person name="Schaefer M."/>
            <person name="Mueller-Auer S."/>
            <person name="Gabel C."/>
            <person name="Fuchs M."/>
            <person name="Benes V."/>
            <person name="Wurmbach E."/>
            <person name="Drzonek H."/>
            <person name="Erfle H."/>
            <person name="Jordan N."/>
            <person name="Bangert S."/>
            <person name="Wiedelmann R."/>
            <person name="Kranz H."/>
            <person name="Voss H."/>
            <person name="Holland R."/>
            <person name="Brandt P."/>
            <person name="Nyakatura G."/>
            <person name="Vezzi A."/>
            <person name="D'Angelo M."/>
            <person name="Pallavicini A."/>
            <person name="Toppo S."/>
            <person name="Simionati B."/>
            <person name="Conrad A."/>
            <person name="Hornischer K."/>
            <person name="Kauer G."/>
            <person name="Loehnert T.-H."/>
            <person name="Nordsiek G."/>
            <person name="Reichelt J."/>
            <person name="Scharfe M."/>
            <person name="Schoen O."/>
            <person name="Bargues M."/>
            <person name="Terol J."/>
            <person name="Climent J."/>
            <person name="Navarro P."/>
            <person name="Collado C."/>
            <person name="Perez-Perez A."/>
            <person name="Ottenwaelder B."/>
            <person name="Duchemin D."/>
            <person name="Cooke R."/>
            <person name="Laudie M."/>
            <person name="Berger-Llauro C."/>
            <person name="Purnelle B."/>
            <person name="Masuy D."/>
            <person name="de Haan M."/>
            <person name="Maarse A.C."/>
            <person name="Alcaraz J.-P."/>
            <person name="Cottet A."/>
            <person name="Casacuberta E."/>
            <person name="Monfort A."/>
            <person name="Argiriou A."/>
            <person name="Flores M."/>
            <person name="Liguori R."/>
            <person name="Vitale D."/>
            <person name="Mannhaupt G."/>
            <person name="Haase D."/>
            <person name="Schoof H."/>
            <person name="Rudd S."/>
            <person name="Zaccaria P."/>
            <person name="Mewes H.-W."/>
            <person name="Mayer K.F.X."/>
            <person name="Kaul S."/>
            <person name="Town C.D."/>
            <person name="Koo H.L."/>
            <person name="Tallon L.J."/>
            <person name="Jenkins J."/>
            <person name="Rooney T."/>
            <person name="Rizzo M."/>
            <person name="Walts A."/>
            <person name="Utterback T."/>
            <person name="Fujii C.Y."/>
            <person name="Shea T.P."/>
            <person name="Creasy T.H."/>
            <person name="Haas B."/>
            <person name="Maiti R."/>
            <person name="Wu D."/>
            <person name="Peterson J."/>
            <person name="Van Aken S."/>
            <person name="Pai G."/>
            <person name="Militscher J."/>
            <person name="Sellers P."/>
            <person name="Gill J.E."/>
            <person name="Feldblyum T.V."/>
            <person name="Preuss D."/>
            <person name="Lin X."/>
            <person name="Nierman W.C."/>
            <person name="Salzberg S.L."/>
            <person name="White O."/>
            <person name="Venter J.C."/>
            <person name="Fraser C.M."/>
            <person name="Kaneko T."/>
            <person name="Nakamura Y."/>
            <person name="Sato S."/>
            <person name="Kato T."/>
            <person name="Asamizu E."/>
            <person name="Sasamoto S."/>
            <person name="Kimura T."/>
            <person name="Idesawa K."/>
            <person name="Kawashima K."/>
            <person name="Kishida Y."/>
            <person name="Kiyokawa C."/>
            <person name="Kohara M."/>
            <person name="Matsumoto M."/>
            <person name="Matsuno A."/>
            <person name="Muraki A."/>
            <person name="Nakayama S."/>
            <person name="Nakazaki N."/>
            <person name="Shinpo S."/>
            <person name="Takeuchi C."/>
            <person name="Wada T."/>
            <person name="Watanabe A."/>
            <person name="Yamada M."/>
            <person name="Yasuda M."/>
            <person name="Tabata S."/>
        </authorList>
    </citation>
    <scope>NUCLEOTIDE SEQUENCE [LARGE SCALE GENOMIC DNA]</scope>
    <source>
        <strain>cv. Columbia</strain>
    </source>
</reference>
<reference key="2">
    <citation type="journal article" date="2017" name="Plant J.">
        <title>Araport11: a complete reannotation of the Arabidopsis thaliana reference genome.</title>
        <authorList>
            <person name="Cheng C.Y."/>
            <person name="Krishnakumar V."/>
            <person name="Chan A.P."/>
            <person name="Thibaud-Nissen F."/>
            <person name="Schobel S."/>
            <person name="Town C.D."/>
        </authorList>
    </citation>
    <scope>GENOME REANNOTATION</scope>
    <source>
        <strain>cv. Columbia</strain>
    </source>
</reference>
<reference key="3">
    <citation type="submission" date="2006-09" db="EMBL/GenBank/DDBJ databases">
        <title>Arabidopsis ORF clones.</title>
        <authorList>
            <person name="Quinitio C."/>
            <person name="Chen H."/>
            <person name="Kim C.J."/>
            <person name="Shinn P."/>
            <person name="Ecker J.R."/>
        </authorList>
    </citation>
    <scope>NUCLEOTIDE SEQUENCE [LARGE SCALE MRNA]</scope>
    <source>
        <strain>cv. Columbia</strain>
    </source>
</reference>
<reference key="4">
    <citation type="submission" date="2002-03" db="EMBL/GenBank/DDBJ databases">
        <title>Full-length cDNA from Arabidopsis thaliana.</title>
        <authorList>
            <person name="Brover V.V."/>
            <person name="Troukhan M.E."/>
            <person name="Alexandrov N.A."/>
            <person name="Lu Y.-P."/>
            <person name="Flavell R.B."/>
            <person name="Feldmann K.A."/>
        </authorList>
    </citation>
    <scope>NUCLEOTIDE SEQUENCE [LARGE SCALE MRNA]</scope>
</reference>
<reference key="5">
    <citation type="journal article" date="2009" name="Mol. Plant">
        <title>Comparative genomic study of the thioredoxin family in photosynthetic organisms with emphasis on Populus trichocarpa.</title>
        <authorList>
            <person name="Chibani K."/>
            <person name="Wingsle G."/>
            <person name="Jacquot J.P."/>
            <person name="Gelhaye E."/>
            <person name="Rouhier N."/>
        </authorList>
    </citation>
    <scope>GENE FAMILY</scope>
    <scope>NOMENCLATURE</scope>
</reference>
<feature type="chain" id="PRO_0000394541" description="Thioredoxin-like 3-3">
    <location>
        <begin position="1"/>
        <end position="126"/>
    </location>
</feature>
<feature type="domain" description="Thioredoxin" evidence="2">
    <location>
        <begin position="5"/>
        <end position="126"/>
    </location>
</feature>
<feature type="region of interest" description="Disordered" evidence="3">
    <location>
        <begin position="1"/>
        <end position="24"/>
    </location>
</feature>
<feature type="active site" description="Nucleophile" evidence="1">
    <location>
        <position position="55"/>
    </location>
</feature>
<feature type="active site" description="Nucleophile" evidence="1">
    <location>
        <position position="58"/>
    </location>
</feature>
<feature type="disulfide bond" description="Redox-active" evidence="2">
    <location>
        <begin position="55"/>
        <end position="58"/>
    </location>
</feature>
<name>TRL33_ARATH</name>
<sequence length="126" mass="14414">MRKQESEGANLEFESKSNDNGNVKIAPNDQSFLTILDDIKSSKSPAVINYGASWCGVCSQILPAFRKLSNSFSKLKFVYADIDECPETTRHIRYTPTFQFYRDGEKVDEMFGAGEQRLHDRLWLHS</sequence>
<proteinExistence type="evidence at transcript level"/>
<protein>
    <recommendedName>
        <fullName>Thioredoxin-like 3-3</fullName>
    </recommendedName>
</protein>
<accession>Q8LCH9</accession>
<accession>Q9SCN9</accession>
<keyword id="KW-1015">Disulfide bond</keyword>
<keyword id="KW-0249">Electron transport</keyword>
<keyword id="KW-0676">Redox-active center</keyword>
<keyword id="KW-1185">Reference proteome</keyword>
<keyword id="KW-0813">Transport</keyword>
<dbReference type="EMBL" id="AL132958">
    <property type="protein sequence ID" value="CAB64225.1"/>
    <property type="status" value="ALT_SEQ"/>
    <property type="molecule type" value="Genomic_DNA"/>
</dbReference>
<dbReference type="EMBL" id="CP002686">
    <property type="protein sequence ID" value="AEE79049.1"/>
    <property type="molecule type" value="Genomic_DNA"/>
</dbReference>
<dbReference type="EMBL" id="BT028940">
    <property type="protein sequence ID" value="ABI49487.1"/>
    <property type="molecule type" value="mRNA"/>
</dbReference>
<dbReference type="EMBL" id="AY086591">
    <property type="protein sequence ID" value="AAM63651.1"/>
    <property type="molecule type" value="mRNA"/>
</dbReference>
<dbReference type="PIR" id="T46168">
    <property type="entry name" value="T46168"/>
</dbReference>
<dbReference type="RefSeq" id="NP_566982.1">
    <property type="nucleotide sequence ID" value="NM_115182.2"/>
</dbReference>
<dbReference type="SMR" id="Q8LCH9"/>
<dbReference type="FunCoup" id="Q8LCH9">
    <property type="interactions" value="28"/>
</dbReference>
<dbReference type="STRING" id="3702.Q8LCH9"/>
<dbReference type="PaxDb" id="3702-AT3G53220.1"/>
<dbReference type="ProteomicsDB" id="246383"/>
<dbReference type="EnsemblPlants" id="AT3G53220.1">
    <property type="protein sequence ID" value="AT3G53220.1"/>
    <property type="gene ID" value="AT3G53220"/>
</dbReference>
<dbReference type="GeneID" id="824488"/>
<dbReference type="Gramene" id="AT3G53220.1">
    <property type="protein sequence ID" value="AT3G53220.1"/>
    <property type="gene ID" value="AT3G53220"/>
</dbReference>
<dbReference type="KEGG" id="ath:AT3G53220"/>
<dbReference type="Araport" id="AT3G53220"/>
<dbReference type="TAIR" id="AT3G53220"/>
<dbReference type="eggNOG" id="KOG0907">
    <property type="taxonomic scope" value="Eukaryota"/>
</dbReference>
<dbReference type="HOGENOM" id="CLU_090389_14_1_1"/>
<dbReference type="InParanoid" id="Q8LCH9"/>
<dbReference type="OMA" id="CQLSNNF"/>
<dbReference type="OrthoDB" id="2121326at2759"/>
<dbReference type="PhylomeDB" id="Q8LCH9"/>
<dbReference type="PRO" id="PR:Q8LCH9"/>
<dbReference type="Proteomes" id="UP000006548">
    <property type="component" value="Chromosome 3"/>
</dbReference>
<dbReference type="ExpressionAtlas" id="Q8LCH9">
    <property type="expression patterns" value="baseline and differential"/>
</dbReference>
<dbReference type="CDD" id="cd02947">
    <property type="entry name" value="TRX_family"/>
    <property type="match status" value="1"/>
</dbReference>
<dbReference type="Gene3D" id="3.40.30.10">
    <property type="entry name" value="Glutaredoxin"/>
    <property type="match status" value="1"/>
</dbReference>
<dbReference type="InterPro" id="IPR036249">
    <property type="entry name" value="Thioredoxin-like_sf"/>
</dbReference>
<dbReference type="InterPro" id="IPR013766">
    <property type="entry name" value="Thioredoxin_domain"/>
</dbReference>
<dbReference type="InterPro" id="IPR044193">
    <property type="entry name" value="TRL33"/>
</dbReference>
<dbReference type="PANTHER" id="PTHR47571">
    <property type="entry name" value="THIOREDOXIN-LIKE 3-3"/>
    <property type="match status" value="1"/>
</dbReference>
<dbReference type="PANTHER" id="PTHR47571:SF1">
    <property type="entry name" value="THIOREDOXIN-LIKE 3-3"/>
    <property type="match status" value="1"/>
</dbReference>
<dbReference type="Pfam" id="PF00085">
    <property type="entry name" value="Thioredoxin"/>
    <property type="match status" value="1"/>
</dbReference>
<dbReference type="SUPFAM" id="SSF52833">
    <property type="entry name" value="Thioredoxin-like"/>
    <property type="match status" value="1"/>
</dbReference>
<dbReference type="PROSITE" id="PS51352">
    <property type="entry name" value="THIOREDOXIN_2"/>
    <property type="match status" value="1"/>
</dbReference>
<comment type="function">
    <text>Probable thiol-disulfide oxidoreductase that may participate in various redox reactions.</text>
</comment>
<comment type="similarity">
    <text evidence="4">Belongs to the thioredoxin family.</text>
</comment>
<comment type="caution">
    <text evidence="4">The active site contains a CGVC motif which differs from the conserved CGPC motif.</text>
</comment>
<comment type="sequence caution" evidence="4">
    <conflict type="erroneous gene model prediction">
        <sequence resource="EMBL-CDS" id="CAB64225"/>
    </conflict>
</comment>
<evidence type="ECO:0000255" key="1"/>
<evidence type="ECO:0000255" key="2">
    <source>
        <dbReference type="PROSITE-ProRule" id="PRU00691"/>
    </source>
</evidence>
<evidence type="ECO:0000256" key="3">
    <source>
        <dbReference type="SAM" id="MobiDB-lite"/>
    </source>
</evidence>
<evidence type="ECO:0000305" key="4"/>
<gene>
    <name type="ordered locus">At3g53220</name>
    <name type="ORF">T4D2.150</name>
</gene>